<name>MSRA_ECODH</name>
<dbReference type="EC" id="1.8.4.11" evidence="1"/>
<dbReference type="EMBL" id="CP000948">
    <property type="protein sequence ID" value="ACB05205.1"/>
    <property type="molecule type" value="Genomic_DNA"/>
</dbReference>
<dbReference type="RefSeq" id="WP_001295196.1">
    <property type="nucleotide sequence ID" value="NC_010473.1"/>
</dbReference>
<dbReference type="BMRB" id="B1XDW8"/>
<dbReference type="SMR" id="B1XDW8"/>
<dbReference type="GeneID" id="93777602"/>
<dbReference type="KEGG" id="ecd:ECDH10B_4414"/>
<dbReference type="HOGENOM" id="CLU_031040_10_3_6"/>
<dbReference type="GO" id="GO:0005737">
    <property type="term" value="C:cytoplasm"/>
    <property type="evidence" value="ECO:0007669"/>
    <property type="project" value="TreeGrafter"/>
</dbReference>
<dbReference type="GO" id="GO:0036456">
    <property type="term" value="F:L-methionine-(S)-S-oxide reductase activity"/>
    <property type="evidence" value="ECO:0007669"/>
    <property type="project" value="TreeGrafter"/>
</dbReference>
<dbReference type="GO" id="GO:0008113">
    <property type="term" value="F:peptide-methionine (S)-S-oxide reductase activity"/>
    <property type="evidence" value="ECO:0007669"/>
    <property type="project" value="UniProtKB-UniRule"/>
</dbReference>
<dbReference type="GO" id="GO:0034599">
    <property type="term" value="P:cellular response to oxidative stress"/>
    <property type="evidence" value="ECO:0007669"/>
    <property type="project" value="TreeGrafter"/>
</dbReference>
<dbReference type="GO" id="GO:0036211">
    <property type="term" value="P:protein modification process"/>
    <property type="evidence" value="ECO:0007669"/>
    <property type="project" value="UniProtKB-UniRule"/>
</dbReference>
<dbReference type="FunFam" id="3.30.1060.10:FF:000001">
    <property type="entry name" value="Peptide methionine sulfoxide reductase MsrA"/>
    <property type="match status" value="1"/>
</dbReference>
<dbReference type="Gene3D" id="3.30.1060.10">
    <property type="entry name" value="Peptide methionine sulphoxide reductase MsrA"/>
    <property type="match status" value="1"/>
</dbReference>
<dbReference type="HAMAP" id="MF_01401">
    <property type="entry name" value="MsrA"/>
    <property type="match status" value="1"/>
</dbReference>
<dbReference type="InterPro" id="IPR002569">
    <property type="entry name" value="Met_Sox_Rdtase_MsrA_dom"/>
</dbReference>
<dbReference type="InterPro" id="IPR036509">
    <property type="entry name" value="Met_Sox_Rdtase_MsrA_sf"/>
</dbReference>
<dbReference type="InterPro" id="IPR050162">
    <property type="entry name" value="MsrA_MetSO_reductase"/>
</dbReference>
<dbReference type="NCBIfam" id="TIGR00401">
    <property type="entry name" value="msrA"/>
    <property type="match status" value="1"/>
</dbReference>
<dbReference type="PANTHER" id="PTHR42799">
    <property type="entry name" value="MITOCHONDRIAL PEPTIDE METHIONINE SULFOXIDE REDUCTASE"/>
    <property type="match status" value="1"/>
</dbReference>
<dbReference type="PANTHER" id="PTHR42799:SF2">
    <property type="entry name" value="MITOCHONDRIAL PEPTIDE METHIONINE SULFOXIDE REDUCTASE"/>
    <property type="match status" value="1"/>
</dbReference>
<dbReference type="Pfam" id="PF01625">
    <property type="entry name" value="PMSR"/>
    <property type="match status" value="1"/>
</dbReference>
<dbReference type="SUPFAM" id="SSF55068">
    <property type="entry name" value="Peptide methionine sulfoxide reductase"/>
    <property type="match status" value="1"/>
</dbReference>
<feature type="chain" id="PRO_1000145403" description="Peptide methionine sulfoxide reductase MsrA">
    <location>
        <begin position="1"/>
        <end position="212"/>
    </location>
</feature>
<feature type="active site" evidence="1">
    <location>
        <position position="52"/>
    </location>
</feature>
<gene>
    <name evidence="1" type="primary">msrA</name>
    <name type="ordered locus">ECDH10B_4414</name>
</gene>
<protein>
    <recommendedName>
        <fullName evidence="1">Peptide methionine sulfoxide reductase MsrA</fullName>
        <shortName evidence="1">Protein-methionine-S-oxide reductase</shortName>
        <ecNumber evidence="1">1.8.4.11</ecNumber>
    </recommendedName>
    <alternativeName>
        <fullName evidence="1">Peptide-methionine (S)-S-oxide reductase</fullName>
        <shortName evidence="1">Peptide Met(O) reductase</shortName>
    </alternativeName>
</protein>
<keyword id="KW-0560">Oxidoreductase</keyword>
<proteinExistence type="inferred from homology"/>
<evidence type="ECO:0000255" key="1">
    <source>
        <dbReference type="HAMAP-Rule" id="MF_01401"/>
    </source>
</evidence>
<accession>B1XDW8</accession>
<reference key="1">
    <citation type="journal article" date="2008" name="J. Bacteriol.">
        <title>The complete genome sequence of Escherichia coli DH10B: insights into the biology of a laboratory workhorse.</title>
        <authorList>
            <person name="Durfee T."/>
            <person name="Nelson R."/>
            <person name="Baldwin S."/>
            <person name="Plunkett G. III"/>
            <person name="Burland V."/>
            <person name="Mau B."/>
            <person name="Petrosino J.F."/>
            <person name="Qin X."/>
            <person name="Muzny D.M."/>
            <person name="Ayele M."/>
            <person name="Gibbs R.A."/>
            <person name="Csorgo B."/>
            <person name="Posfai G."/>
            <person name="Weinstock G.M."/>
            <person name="Blattner F.R."/>
        </authorList>
    </citation>
    <scope>NUCLEOTIDE SEQUENCE [LARGE SCALE GENOMIC DNA]</scope>
    <source>
        <strain>K12 / DH10B</strain>
    </source>
</reference>
<organism>
    <name type="scientific">Escherichia coli (strain K12 / DH10B)</name>
    <dbReference type="NCBI Taxonomy" id="316385"/>
    <lineage>
        <taxon>Bacteria</taxon>
        <taxon>Pseudomonadati</taxon>
        <taxon>Pseudomonadota</taxon>
        <taxon>Gammaproteobacteria</taxon>
        <taxon>Enterobacterales</taxon>
        <taxon>Enterobacteriaceae</taxon>
        <taxon>Escherichia</taxon>
    </lineage>
</organism>
<comment type="function">
    <text evidence="1">Has an important function as a repair enzyme for proteins that have been inactivated by oxidation. Catalyzes the reversible oxidation-reduction of methionine sulfoxide in proteins to methionine.</text>
</comment>
<comment type="catalytic activity">
    <reaction evidence="1">
        <text>L-methionyl-[protein] + [thioredoxin]-disulfide + H2O = L-methionyl-(S)-S-oxide-[protein] + [thioredoxin]-dithiol</text>
        <dbReference type="Rhea" id="RHEA:14217"/>
        <dbReference type="Rhea" id="RHEA-COMP:10698"/>
        <dbReference type="Rhea" id="RHEA-COMP:10700"/>
        <dbReference type="Rhea" id="RHEA-COMP:12313"/>
        <dbReference type="Rhea" id="RHEA-COMP:12315"/>
        <dbReference type="ChEBI" id="CHEBI:15377"/>
        <dbReference type="ChEBI" id="CHEBI:16044"/>
        <dbReference type="ChEBI" id="CHEBI:29950"/>
        <dbReference type="ChEBI" id="CHEBI:44120"/>
        <dbReference type="ChEBI" id="CHEBI:50058"/>
        <dbReference type="EC" id="1.8.4.11"/>
    </reaction>
</comment>
<comment type="catalytic activity">
    <reaction evidence="1">
        <text>[thioredoxin]-disulfide + L-methionine + H2O = L-methionine (S)-S-oxide + [thioredoxin]-dithiol</text>
        <dbReference type="Rhea" id="RHEA:19993"/>
        <dbReference type="Rhea" id="RHEA-COMP:10698"/>
        <dbReference type="Rhea" id="RHEA-COMP:10700"/>
        <dbReference type="ChEBI" id="CHEBI:15377"/>
        <dbReference type="ChEBI" id="CHEBI:29950"/>
        <dbReference type="ChEBI" id="CHEBI:50058"/>
        <dbReference type="ChEBI" id="CHEBI:57844"/>
        <dbReference type="ChEBI" id="CHEBI:58772"/>
        <dbReference type="EC" id="1.8.4.11"/>
    </reaction>
</comment>
<comment type="similarity">
    <text evidence="1">Belongs to the MsrA Met sulfoxide reductase family.</text>
</comment>
<sequence length="212" mass="23315">MSLFDKKHLVSPADALPGRNTPMPVATLHAVNGHSMTNVPDGMEIAIFAMGCFWGVERLFWQLPGVYSTAAGYTGGYTPNPTYREVCSGDTGHAEAVRIVYDPSVISYEQLLQVFWENHDPAQGMRQGNDHGTQYRSAIYPLTPEQDAAARASLERFQAAMLAADDDRHITTEIANATPFYYAEDDHQQYLHKNPYGYCGIGGIGVCLPPEA</sequence>